<organism>
    <name type="scientific">Proteus mirabilis (strain HI4320)</name>
    <dbReference type="NCBI Taxonomy" id="529507"/>
    <lineage>
        <taxon>Bacteria</taxon>
        <taxon>Pseudomonadati</taxon>
        <taxon>Pseudomonadota</taxon>
        <taxon>Gammaproteobacteria</taxon>
        <taxon>Enterobacterales</taxon>
        <taxon>Morganellaceae</taxon>
        <taxon>Proteus</taxon>
    </lineage>
</organism>
<proteinExistence type="inferred from homology"/>
<sequence length="224" mass="25477">MDYTLTRIDPNGENDRYPLQSQEIVSDPLDAHVHRSVYMGKLEHALHDVVNWGRKNSLWPYNFGLSCCYVEMVTSFTAVHDVARFGSEVLRASPRQADFMVVAGTCFTKMAPVIQRLYDQMLEPKWVISMGACANSGGMYDIYSVVQGVDKFIPVDVYIPGCPPRPEAYMQALMLLQESIGKERRPLSWVVGDQGVYRANMQSERERKHGERIAVKNLRTPDEI</sequence>
<protein>
    <recommendedName>
        <fullName evidence="1">NADH-quinone oxidoreductase subunit B</fullName>
        <ecNumber evidence="1">7.1.1.-</ecNumber>
    </recommendedName>
    <alternativeName>
        <fullName evidence="1">NADH dehydrogenase I subunit B</fullName>
    </alternativeName>
    <alternativeName>
        <fullName evidence="1">NDH-1 subunit B</fullName>
    </alternativeName>
</protein>
<dbReference type="EC" id="7.1.1.-" evidence="1"/>
<dbReference type="EMBL" id="AM942759">
    <property type="protein sequence ID" value="CAR43667.1"/>
    <property type="molecule type" value="Genomic_DNA"/>
</dbReference>
<dbReference type="RefSeq" id="WP_004243697.1">
    <property type="nucleotide sequence ID" value="NC_010554.1"/>
</dbReference>
<dbReference type="SMR" id="B4EZC9"/>
<dbReference type="EnsemblBacteria" id="CAR43667">
    <property type="protein sequence ID" value="CAR43667"/>
    <property type="gene ID" value="PMI1761"/>
</dbReference>
<dbReference type="KEGG" id="pmr:PMI1761"/>
<dbReference type="eggNOG" id="COG0377">
    <property type="taxonomic scope" value="Bacteria"/>
</dbReference>
<dbReference type="HOGENOM" id="CLU_055737_7_3_6"/>
<dbReference type="Proteomes" id="UP000008319">
    <property type="component" value="Chromosome"/>
</dbReference>
<dbReference type="GO" id="GO:0005886">
    <property type="term" value="C:plasma membrane"/>
    <property type="evidence" value="ECO:0007669"/>
    <property type="project" value="UniProtKB-SubCell"/>
</dbReference>
<dbReference type="GO" id="GO:0045271">
    <property type="term" value="C:respiratory chain complex I"/>
    <property type="evidence" value="ECO:0007669"/>
    <property type="project" value="TreeGrafter"/>
</dbReference>
<dbReference type="GO" id="GO:0051539">
    <property type="term" value="F:4 iron, 4 sulfur cluster binding"/>
    <property type="evidence" value="ECO:0007669"/>
    <property type="project" value="UniProtKB-KW"/>
</dbReference>
<dbReference type="GO" id="GO:0005506">
    <property type="term" value="F:iron ion binding"/>
    <property type="evidence" value="ECO:0007669"/>
    <property type="project" value="UniProtKB-UniRule"/>
</dbReference>
<dbReference type="GO" id="GO:0008137">
    <property type="term" value="F:NADH dehydrogenase (ubiquinone) activity"/>
    <property type="evidence" value="ECO:0007669"/>
    <property type="project" value="InterPro"/>
</dbReference>
<dbReference type="GO" id="GO:0050136">
    <property type="term" value="F:NADH:ubiquinone reductase (non-electrogenic) activity"/>
    <property type="evidence" value="ECO:0007669"/>
    <property type="project" value="UniProtKB-UniRule"/>
</dbReference>
<dbReference type="GO" id="GO:0048038">
    <property type="term" value="F:quinone binding"/>
    <property type="evidence" value="ECO:0007669"/>
    <property type="project" value="UniProtKB-KW"/>
</dbReference>
<dbReference type="GO" id="GO:0009060">
    <property type="term" value="P:aerobic respiration"/>
    <property type="evidence" value="ECO:0007669"/>
    <property type="project" value="TreeGrafter"/>
</dbReference>
<dbReference type="GO" id="GO:0015990">
    <property type="term" value="P:electron transport coupled proton transport"/>
    <property type="evidence" value="ECO:0007669"/>
    <property type="project" value="TreeGrafter"/>
</dbReference>
<dbReference type="FunFam" id="3.40.50.12280:FF:000002">
    <property type="entry name" value="NADH-quinone oxidoreductase subunit B"/>
    <property type="match status" value="1"/>
</dbReference>
<dbReference type="Gene3D" id="3.40.50.12280">
    <property type="match status" value="1"/>
</dbReference>
<dbReference type="HAMAP" id="MF_01356">
    <property type="entry name" value="NDH1_NuoB"/>
    <property type="match status" value="1"/>
</dbReference>
<dbReference type="InterPro" id="IPR006137">
    <property type="entry name" value="NADH_UbQ_OxRdtase-like_20kDa"/>
</dbReference>
<dbReference type="InterPro" id="IPR006138">
    <property type="entry name" value="NADH_UQ_OxRdtase_20Kd_su"/>
</dbReference>
<dbReference type="NCBIfam" id="TIGR01957">
    <property type="entry name" value="nuoB_fam"/>
    <property type="match status" value="1"/>
</dbReference>
<dbReference type="NCBIfam" id="NF005012">
    <property type="entry name" value="PRK06411.1"/>
    <property type="match status" value="1"/>
</dbReference>
<dbReference type="PANTHER" id="PTHR11995">
    <property type="entry name" value="NADH DEHYDROGENASE"/>
    <property type="match status" value="1"/>
</dbReference>
<dbReference type="PANTHER" id="PTHR11995:SF14">
    <property type="entry name" value="NADH DEHYDROGENASE [UBIQUINONE] IRON-SULFUR PROTEIN 7, MITOCHONDRIAL"/>
    <property type="match status" value="1"/>
</dbReference>
<dbReference type="Pfam" id="PF01058">
    <property type="entry name" value="Oxidored_q6"/>
    <property type="match status" value="1"/>
</dbReference>
<dbReference type="SUPFAM" id="SSF56770">
    <property type="entry name" value="HydA/Nqo6-like"/>
    <property type="match status" value="1"/>
</dbReference>
<dbReference type="PROSITE" id="PS01150">
    <property type="entry name" value="COMPLEX1_20K"/>
    <property type="match status" value="1"/>
</dbReference>
<keyword id="KW-0004">4Fe-4S</keyword>
<keyword id="KW-0997">Cell inner membrane</keyword>
<keyword id="KW-1003">Cell membrane</keyword>
<keyword id="KW-0408">Iron</keyword>
<keyword id="KW-0411">Iron-sulfur</keyword>
<keyword id="KW-0472">Membrane</keyword>
<keyword id="KW-0479">Metal-binding</keyword>
<keyword id="KW-0520">NAD</keyword>
<keyword id="KW-0874">Quinone</keyword>
<keyword id="KW-1185">Reference proteome</keyword>
<keyword id="KW-1278">Translocase</keyword>
<keyword id="KW-0813">Transport</keyword>
<keyword id="KW-0830">Ubiquinone</keyword>
<accession>B4EZC9</accession>
<feature type="chain" id="PRO_0000376306" description="NADH-quinone oxidoreductase subunit B">
    <location>
        <begin position="1"/>
        <end position="224"/>
    </location>
</feature>
<feature type="binding site" evidence="1">
    <location>
        <position position="67"/>
    </location>
    <ligand>
        <name>[4Fe-4S] cluster</name>
        <dbReference type="ChEBI" id="CHEBI:49883"/>
    </ligand>
</feature>
<feature type="binding site" evidence="1">
    <location>
        <position position="68"/>
    </location>
    <ligand>
        <name>[4Fe-4S] cluster</name>
        <dbReference type="ChEBI" id="CHEBI:49883"/>
    </ligand>
</feature>
<feature type="binding site" evidence="1">
    <location>
        <position position="133"/>
    </location>
    <ligand>
        <name>[4Fe-4S] cluster</name>
        <dbReference type="ChEBI" id="CHEBI:49883"/>
    </ligand>
</feature>
<feature type="binding site" evidence="1">
    <location>
        <position position="162"/>
    </location>
    <ligand>
        <name>[4Fe-4S] cluster</name>
        <dbReference type="ChEBI" id="CHEBI:49883"/>
    </ligand>
</feature>
<name>NUOB_PROMH</name>
<reference key="1">
    <citation type="journal article" date="2008" name="J. Bacteriol.">
        <title>Complete genome sequence of uropathogenic Proteus mirabilis, a master of both adherence and motility.</title>
        <authorList>
            <person name="Pearson M.M."/>
            <person name="Sebaihia M."/>
            <person name="Churcher C."/>
            <person name="Quail M.A."/>
            <person name="Seshasayee A.S."/>
            <person name="Luscombe N.M."/>
            <person name="Abdellah Z."/>
            <person name="Arrosmith C."/>
            <person name="Atkin B."/>
            <person name="Chillingworth T."/>
            <person name="Hauser H."/>
            <person name="Jagels K."/>
            <person name="Moule S."/>
            <person name="Mungall K."/>
            <person name="Norbertczak H."/>
            <person name="Rabbinowitsch E."/>
            <person name="Walker D."/>
            <person name="Whithead S."/>
            <person name="Thomson N.R."/>
            <person name="Rather P.N."/>
            <person name="Parkhill J."/>
            <person name="Mobley H.L.T."/>
        </authorList>
    </citation>
    <scope>NUCLEOTIDE SEQUENCE [LARGE SCALE GENOMIC DNA]</scope>
    <source>
        <strain>HI4320</strain>
    </source>
</reference>
<evidence type="ECO:0000255" key="1">
    <source>
        <dbReference type="HAMAP-Rule" id="MF_01356"/>
    </source>
</evidence>
<comment type="function">
    <text evidence="1">NDH-1 shuttles electrons from NADH, via FMN and iron-sulfur (Fe-S) centers, to quinones in the respiratory chain. The immediate electron acceptor for the enzyme in this species is believed to be ubiquinone. Couples the redox reaction to proton translocation (for every two electrons transferred, four hydrogen ions are translocated across the cytoplasmic membrane), and thus conserves the redox energy in a proton gradient.</text>
</comment>
<comment type="catalytic activity">
    <reaction evidence="1">
        <text>a quinone + NADH + 5 H(+)(in) = a quinol + NAD(+) + 4 H(+)(out)</text>
        <dbReference type="Rhea" id="RHEA:57888"/>
        <dbReference type="ChEBI" id="CHEBI:15378"/>
        <dbReference type="ChEBI" id="CHEBI:24646"/>
        <dbReference type="ChEBI" id="CHEBI:57540"/>
        <dbReference type="ChEBI" id="CHEBI:57945"/>
        <dbReference type="ChEBI" id="CHEBI:132124"/>
    </reaction>
</comment>
<comment type="cofactor">
    <cofactor evidence="1">
        <name>[4Fe-4S] cluster</name>
        <dbReference type="ChEBI" id="CHEBI:49883"/>
    </cofactor>
    <text evidence="1">Binds 1 [4Fe-4S] cluster.</text>
</comment>
<comment type="subunit">
    <text evidence="1">NDH-1 is composed of 13 different subunits. Subunits NuoB, CD, E, F, and G constitute the peripheral sector of the complex.</text>
</comment>
<comment type="subcellular location">
    <subcellularLocation>
        <location evidence="1">Cell inner membrane</location>
        <topology evidence="1">Peripheral membrane protein</topology>
        <orientation evidence="1">Cytoplasmic side</orientation>
    </subcellularLocation>
</comment>
<comment type="similarity">
    <text evidence="1">Belongs to the complex I 20 kDa subunit family.</text>
</comment>
<gene>
    <name evidence="1" type="primary">nuoB</name>
    <name type="ordered locus">PMI1761</name>
</gene>